<evidence type="ECO:0000255" key="1">
    <source>
        <dbReference type="HAMAP-Rule" id="MF_01201"/>
    </source>
</evidence>
<proteinExistence type="inferred from homology"/>
<protein>
    <recommendedName>
        <fullName evidence="1">Alanine racemase</fullName>
        <ecNumber evidence="1">5.1.1.1</ecNumber>
    </recommendedName>
</protein>
<feature type="chain" id="PRO_1000138619" description="Alanine racemase">
    <location>
        <begin position="1"/>
        <end position="349"/>
    </location>
</feature>
<feature type="active site" description="Proton acceptor; specific for D-alanine" evidence="1">
    <location>
        <position position="35"/>
    </location>
</feature>
<feature type="active site" description="Proton acceptor; specific for L-alanine" evidence="1">
    <location>
        <position position="244"/>
    </location>
</feature>
<feature type="binding site" evidence="1">
    <location>
        <position position="130"/>
    </location>
    <ligand>
        <name>substrate</name>
    </ligand>
</feature>
<feature type="binding site" evidence="1">
    <location>
        <position position="292"/>
    </location>
    <ligand>
        <name>substrate</name>
    </ligand>
</feature>
<feature type="modified residue" description="N6-(pyridoxal phosphate)lysine" evidence="1">
    <location>
        <position position="35"/>
    </location>
</feature>
<sequence>MATATLTIDLDAIAANWRALDQMTASDCQTGAVVKADAYGLGAAKVAHALARAGARRFFVAACEEGAEVRRALGSGPQICVFSGHMEGDTALIRDFDLTPMLNSIEQLTRHFETLGGQPFGLQLDSGMNRLGLEPGEWEAVAATALEAGPELLMSHLACADEPDHPMNTEQLRAFRAMTDGTGVPRSLSATGGILLGPAWHFELTRPGIGLYGGRPFEEARPVVHLSLPVVQVREVEIGEPVGYSNSWTAEHTSTIATVAAGYADGLPRTLSSRASLFAGRVPCPLVGRVSMDLITVDVSHLPEVPDALDILCRHQTPDDLADTAGTIGYEILTSLGRRYQRRYGALAA</sequence>
<dbReference type="EC" id="5.1.1.1" evidence="1"/>
<dbReference type="EMBL" id="CP000661">
    <property type="protein sequence ID" value="ABP69969.1"/>
    <property type="molecule type" value="Genomic_DNA"/>
</dbReference>
<dbReference type="SMR" id="A4WRF5"/>
<dbReference type="STRING" id="349102.Rsph17025_1068"/>
<dbReference type="KEGG" id="rsq:Rsph17025_1068"/>
<dbReference type="eggNOG" id="COG0787">
    <property type="taxonomic scope" value="Bacteria"/>
</dbReference>
<dbReference type="HOGENOM" id="CLU_028393_1_1_5"/>
<dbReference type="BioCyc" id="RSPH349102:G1G8M-1095-MONOMER"/>
<dbReference type="UniPathway" id="UPA00042">
    <property type="reaction ID" value="UER00497"/>
</dbReference>
<dbReference type="GO" id="GO:0005829">
    <property type="term" value="C:cytosol"/>
    <property type="evidence" value="ECO:0007669"/>
    <property type="project" value="TreeGrafter"/>
</dbReference>
<dbReference type="GO" id="GO:0008784">
    <property type="term" value="F:alanine racemase activity"/>
    <property type="evidence" value="ECO:0007669"/>
    <property type="project" value="UniProtKB-UniRule"/>
</dbReference>
<dbReference type="GO" id="GO:0030170">
    <property type="term" value="F:pyridoxal phosphate binding"/>
    <property type="evidence" value="ECO:0007669"/>
    <property type="project" value="UniProtKB-UniRule"/>
</dbReference>
<dbReference type="GO" id="GO:0030632">
    <property type="term" value="P:D-alanine biosynthetic process"/>
    <property type="evidence" value="ECO:0007669"/>
    <property type="project" value="UniProtKB-UniRule"/>
</dbReference>
<dbReference type="CDD" id="cd00430">
    <property type="entry name" value="PLPDE_III_AR"/>
    <property type="match status" value="1"/>
</dbReference>
<dbReference type="Gene3D" id="3.20.20.10">
    <property type="entry name" value="Alanine racemase"/>
    <property type="match status" value="1"/>
</dbReference>
<dbReference type="Gene3D" id="2.40.37.10">
    <property type="entry name" value="Lyase, Ornithine Decarboxylase, Chain A, domain 1"/>
    <property type="match status" value="1"/>
</dbReference>
<dbReference type="HAMAP" id="MF_01201">
    <property type="entry name" value="Ala_racemase"/>
    <property type="match status" value="1"/>
</dbReference>
<dbReference type="InterPro" id="IPR000821">
    <property type="entry name" value="Ala_racemase"/>
</dbReference>
<dbReference type="InterPro" id="IPR009006">
    <property type="entry name" value="Ala_racemase/Decarboxylase_C"/>
</dbReference>
<dbReference type="InterPro" id="IPR011079">
    <property type="entry name" value="Ala_racemase_C"/>
</dbReference>
<dbReference type="InterPro" id="IPR001608">
    <property type="entry name" value="Ala_racemase_N"/>
</dbReference>
<dbReference type="InterPro" id="IPR020622">
    <property type="entry name" value="Ala_racemase_pyridoxalP-BS"/>
</dbReference>
<dbReference type="InterPro" id="IPR029066">
    <property type="entry name" value="PLP-binding_barrel"/>
</dbReference>
<dbReference type="NCBIfam" id="TIGR00492">
    <property type="entry name" value="alr"/>
    <property type="match status" value="1"/>
</dbReference>
<dbReference type="PANTHER" id="PTHR30511">
    <property type="entry name" value="ALANINE RACEMASE"/>
    <property type="match status" value="1"/>
</dbReference>
<dbReference type="PANTHER" id="PTHR30511:SF0">
    <property type="entry name" value="ALANINE RACEMASE, CATABOLIC-RELATED"/>
    <property type="match status" value="1"/>
</dbReference>
<dbReference type="Pfam" id="PF00842">
    <property type="entry name" value="Ala_racemase_C"/>
    <property type="match status" value="1"/>
</dbReference>
<dbReference type="Pfam" id="PF01168">
    <property type="entry name" value="Ala_racemase_N"/>
    <property type="match status" value="1"/>
</dbReference>
<dbReference type="PRINTS" id="PR00992">
    <property type="entry name" value="ALARACEMASE"/>
</dbReference>
<dbReference type="SMART" id="SM01005">
    <property type="entry name" value="Ala_racemase_C"/>
    <property type="match status" value="1"/>
</dbReference>
<dbReference type="SUPFAM" id="SSF50621">
    <property type="entry name" value="Alanine racemase C-terminal domain-like"/>
    <property type="match status" value="1"/>
</dbReference>
<dbReference type="SUPFAM" id="SSF51419">
    <property type="entry name" value="PLP-binding barrel"/>
    <property type="match status" value="1"/>
</dbReference>
<dbReference type="PROSITE" id="PS00395">
    <property type="entry name" value="ALANINE_RACEMASE"/>
    <property type="match status" value="1"/>
</dbReference>
<reference key="1">
    <citation type="submission" date="2007-04" db="EMBL/GenBank/DDBJ databases">
        <title>Complete sequence of chromosome of Rhodobacter sphaeroides ATCC 17025.</title>
        <authorList>
            <consortium name="US DOE Joint Genome Institute"/>
            <person name="Copeland A."/>
            <person name="Lucas S."/>
            <person name="Lapidus A."/>
            <person name="Barry K."/>
            <person name="Detter J.C."/>
            <person name="Glavina del Rio T."/>
            <person name="Hammon N."/>
            <person name="Israni S."/>
            <person name="Dalin E."/>
            <person name="Tice H."/>
            <person name="Pitluck S."/>
            <person name="Chertkov O."/>
            <person name="Brettin T."/>
            <person name="Bruce D."/>
            <person name="Han C."/>
            <person name="Schmutz J."/>
            <person name="Larimer F."/>
            <person name="Land M."/>
            <person name="Hauser L."/>
            <person name="Kyrpides N."/>
            <person name="Kim E."/>
            <person name="Richardson P."/>
            <person name="Mackenzie C."/>
            <person name="Choudhary M."/>
            <person name="Donohue T.J."/>
            <person name="Kaplan S."/>
        </authorList>
    </citation>
    <scope>NUCLEOTIDE SEQUENCE [LARGE SCALE GENOMIC DNA]</scope>
    <source>
        <strain>ATCC 17025 / ATH 2.4.3</strain>
    </source>
</reference>
<accession>A4WRF5</accession>
<comment type="function">
    <text evidence="1">Catalyzes the interconversion of L-alanine and D-alanine. May also act on other amino acids.</text>
</comment>
<comment type="catalytic activity">
    <reaction evidence="1">
        <text>L-alanine = D-alanine</text>
        <dbReference type="Rhea" id="RHEA:20249"/>
        <dbReference type="ChEBI" id="CHEBI:57416"/>
        <dbReference type="ChEBI" id="CHEBI:57972"/>
        <dbReference type="EC" id="5.1.1.1"/>
    </reaction>
</comment>
<comment type="cofactor">
    <cofactor evidence="1">
        <name>pyridoxal 5'-phosphate</name>
        <dbReference type="ChEBI" id="CHEBI:597326"/>
    </cofactor>
</comment>
<comment type="pathway">
    <text evidence="1">Amino-acid biosynthesis; D-alanine biosynthesis; D-alanine from L-alanine: step 1/1.</text>
</comment>
<comment type="similarity">
    <text evidence="1">Belongs to the alanine racemase family.</text>
</comment>
<gene>
    <name type="primary">alr</name>
    <name type="ordered locus">Rsph17025_1068</name>
</gene>
<name>ALR_CERS5</name>
<keyword id="KW-0413">Isomerase</keyword>
<keyword id="KW-0663">Pyridoxal phosphate</keyword>
<organism>
    <name type="scientific">Cereibacter sphaeroides (strain ATCC 17025 / ATH 2.4.3)</name>
    <name type="common">Rhodobacter sphaeroides</name>
    <dbReference type="NCBI Taxonomy" id="349102"/>
    <lineage>
        <taxon>Bacteria</taxon>
        <taxon>Pseudomonadati</taxon>
        <taxon>Pseudomonadota</taxon>
        <taxon>Alphaproteobacteria</taxon>
        <taxon>Rhodobacterales</taxon>
        <taxon>Paracoccaceae</taxon>
        <taxon>Cereibacter</taxon>
    </lineage>
</organism>